<comment type="function">
    <text evidence="1">Together with its co-chaperonin GroES, plays an essential role in assisting protein folding. The GroEL-GroES system forms a nano-cage that allows encapsulation of the non-native substrate proteins and provides a physical environment optimized to promote and accelerate protein folding.</text>
</comment>
<comment type="catalytic activity">
    <reaction evidence="1">
        <text>ATP + H2O + a folded polypeptide = ADP + phosphate + an unfolded polypeptide.</text>
        <dbReference type="EC" id="5.6.1.7"/>
    </reaction>
</comment>
<comment type="subunit">
    <text evidence="1">Forms a cylinder of 14 subunits composed of two heptameric rings stacked back-to-back. Interacts with the co-chaperonin GroES.</text>
</comment>
<comment type="subcellular location">
    <subcellularLocation>
        <location evidence="1">Cytoplasm</location>
    </subcellularLocation>
</comment>
<comment type="similarity">
    <text evidence="1">Belongs to the chaperonin (HSP60) family.</text>
</comment>
<proteinExistence type="inferred from homology"/>
<gene>
    <name evidence="1" type="primary">groEL</name>
    <name evidence="1" type="synonym">groL</name>
    <name type="synonym">mopA</name>
</gene>
<accession>Q9ZFE0</accession>
<feature type="chain" id="PRO_0000063316" description="Chaperonin GroEL">
    <location>
        <begin position="1"/>
        <end position="546"/>
    </location>
</feature>
<feature type="region of interest" description="Disordered" evidence="2">
    <location>
        <begin position="526"/>
        <end position="546"/>
    </location>
</feature>
<feature type="compositionally biased region" description="Gly residues" evidence="2">
    <location>
        <begin position="534"/>
        <end position="546"/>
    </location>
</feature>
<feature type="binding site" evidence="1">
    <location>
        <begin position="30"/>
        <end position="33"/>
    </location>
    <ligand>
        <name>ATP</name>
        <dbReference type="ChEBI" id="CHEBI:30616"/>
    </ligand>
</feature>
<feature type="binding site" evidence="1">
    <location>
        <position position="51"/>
    </location>
    <ligand>
        <name>ATP</name>
        <dbReference type="ChEBI" id="CHEBI:30616"/>
    </ligand>
</feature>
<feature type="binding site" evidence="1">
    <location>
        <begin position="87"/>
        <end position="91"/>
    </location>
    <ligand>
        <name>ATP</name>
        <dbReference type="ChEBI" id="CHEBI:30616"/>
    </ligand>
</feature>
<feature type="binding site" evidence="1">
    <location>
        <position position="415"/>
    </location>
    <ligand>
        <name>ATP</name>
        <dbReference type="ChEBI" id="CHEBI:30616"/>
    </ligand>
</feature>
<feature type="binding site" evidence="1">
    <location>
        <begin position="479"/>
        <end position="481"/>
    </location>
    <ligand>
        <name>ATP</name>
        <dbReference type="ChEBI" id="CHEBI:30616"/>
    </ligand>
</feature>
<feature type="binding site" evidence="1">
    <location>
        <position position="495"/>
    </location>
    <ligand>
        <name>ATP</name>
        <dbReference type="ChEBI" id="CHEBI:30616"/>
    </ligand>
</feature>
<evidence type="ECO:0000255" key="1">
    <source>
        <dbReference type="HAMAP-Rule" id="MF_00600"/>
    </source>
</evidence>
<evidence type="ECO:0000256" key="2">
    <source>
        <dbReference type="SAM" id="MobiDB-lite"/>
    </source>
</evidence>
<name>CH60_BURCE</name>
<sequence length="546" mass="56980">MAAKDVVFGDSARSKMVEGVNILANAVKVTLGPKGRNVVLERSFGGPTVTKDGVSVAKEIELKDKLQNMGAQMVKEVASKTSDNAGDGTTTATVLAQSIVREGMKYVASGMNPMDLKRGIDKAVAAAVEELKKISKPCTTNKEIAQVGSISANSDSSIGDRIAEAMDKVGKEGVITVEDGKSLADELDVVEGMQFDRGYLSPYFINNPDKQVAVLDNPFVLLHDKKVSNIRDLLPVLEQVAKAGRPLLIIAEDVEGEALATLVVNNIRGILKTVAVKAPGFGDRRKAMLEDIAILTGGQVIAEETGLTLEKATLAELGQAKRIEVGKENTTIIDGAGEAASIEARVKQVRAQIEEATSDYDREKLQERVAKLAGGVAVIKVGAATEVEMKEKKARVEDALHATRAAVEEGIVAGGGVALIRARTAIAGLTGANADQNAGIKIVLRAMEEPLRQIVTNGGEEASVVVAAVAAGKGNYGYNAATGEYVDMVEAGVVDPTKVTRTALQNAASVAGLLLTTDAAVAELPKEDAPMPGGMPGGMGGMGMDM</sequence>
<organism>
    <name type="scientific">Burkholderia cepacia</name>
    <name type="common">Pseudomonas cepacia</name>
    <dbReference type="NCBI Taxonomy" id="292"/>
    <lineage>
        <taxon>Bacteria</taxon>
        <taxon>Pseudomonadati</taxon>
        <taxon>Pseudomonadota</taxon>
        <taxon>Betaproteobacteria</taxon>
        <taxon>Burkholderiales</taxon>
        <taxon>Burkholderiaceae</taxon>
        <taxon>Burkholderia</taxon>
        <taxon>Burkholderia cepacia complex</taxon>
    </lineage>
</organism>
<keyword id="KW-0067">ATP-binding</keyword>
<keyword id="KW-0143">Chaperone</keyword>
<keyword id="KW-0963">Cytoplasm</keyword>
<keyword id="KW-0413">Isomerase</keyword>
<keyword id="KW-0547">Nucleotide-binding</keyword>
<dbReference type="EC" id="5.6.1.7" evidence="1"/>
<dbReference type="EMBL" id="AF104907">
    <property type="protein sequence ID" value="AAC79087.1"/>
    <property type="molecule type" value="Genomic_DNA"/>
</dbReference>
<dbReference type="SMR" id="Q9ZFE0"/>
<dbReference type="STRING" id="292.WI67_04135"/>
<dbReference type="KEGG" id="bced:DM42_969"/>
<dbReference type="eggNOG" id="COG0459">
    <property type="taxonomic scope" value="Bacteria"/>
</dbReference>
<dbReference type="GO" id="GO:0005737">
    <property type="term" value="C:cytoplasm"/>
    <property type="evidence" value="ECO:0007669"/>
    <property type="project" value="UniProtKB-SubCell"/>
</dbReference>
<dbReference type="GO" id="GO:0005524">
    <property type="term" value="F:ATP binding"/>
    <property type="evidence" value="ECO:0007669"/>
    <property type="project" value="UniProtKB-UniRule"/>
</dbReference>
<dbReference type="GO" id="GO:0140662">
    <property type="term" value="F:ATP-dependent protein folding chaperone"/>
    <property type="evidence" value="ECO:0007669"/>
    <property type="project" value="InterPro"/>
</dbReference>
<dbReference type="GO" id="GO:0016853">
    <property type="term" value="F:isomerase activity"/>
    <property type="evidence" value="ECO:0007669"/>
    <property type="project" value="UniProtKB-KW"/>
</dbReference>
<dbReference type="GO" id="GO:0051082">
    <property type="term" value="F:unfolded protein binding"/>
    <property type="evidence" value="ECO:0007669"/>
    <property type="project" value="UniProtKB-UniRule"/>
</dbReference>
<dbReference type="GO" id="GO:0042026">
    <property type="term" value="P:protein refolding"/>
    <property type="evidence" value="ECO:0007669"/>
    <property type="project" value="UniProtKB-UniRule"/>
</dbReference>
<dbReference type="CDD" id="cd03344">
    <property type="entry name" value="GroEL"/>
    <property type="match status" value="1"/>
</dbReference>
<dbReference type="FunFam" id="1.10.560.10:FF:000001">
    <property type="entry name" value="60 kDa chaperonin"/>
    <property type="match status" value="1"/>
</dbReference>
<dbReference type="FunFam" id="3.50.7.10:FF:000001">
    <property type="entry name" value="60 kDa chaperonin"/>
    <property type="match status" value="1"/>
</dbReference>
<dbReference type="Gene3D" id="3.50.7.10">
    <property type="entry name" value="GroEL"/>
    <property type="match status" value="1"/>
</dbReference>
<dbReference type="Gene3D" id="1.10.560.10">
    <property type="entry name" value="GroEL-like equatorial domain"/>
    <property type="match status" value="1"/>
</dbReference>
<dbReference type="Gene3D" id="3.30.260.10">
    <property type="entry name" value="TCP-1-like chaperonin intermediate domain"/>
    <property type="match status" value="1"/>
</dbReference>
<dbReference type="HAMAP" id="MF_00600">
    <property type="entry name" value="CH60"/>
    <property type="match status" value="1"/>
</dbReference>
<dbReference type="InterPro" id="IPR018370">
    <property type="entry name" value="Chaperonin_Cpn60_CS"/>
</dbReference>
<dbReference type="InterPro" id="IPR001844">
    <property type="entry name" value="Cpn60/GroEL"/>
</dbReference>
<dbReference type="InterPro" id="IPR002423">
    <property type="entry name" value="Cpn60/GroEL/TCP-1"/>
</dbReference>
<dbReference type="InterPro" id="IPR027409">
    <property type="entry name" value="GroEL-like_apical_dom_sf"/>
</dbReference>
<dbReference type="InterPro" id="IPR027413">
    <property type="entry name" value="GROEL-like_equatorial_sf"/>
</dbReference>
<dbReference type="InterPro" id="IPR027410">
    <property type="entry name" value="TCP-1-like_intermed_sf"/>
</dbReference>
<dbReference type="NCBIfam" id="TIGR02348">
    <property type="entry name" value="GroEL"/>
    <property type="match status" value="1"/>
</dbReference>
<dbReference type="NCBIfam" id="NF000592">
    <property type="entry name" value="PRK00013.1"/>
    <property type="match status" value="1"/>
</dbReference>
<dbReference type="NCBIfam" id="NF009487">
    <property type="entry name" value="PRK12849.1"/>
    <property type="match status" value="1"/>
</dbReference>
<dbReference type="NCBIfam" id="NF009488">
    <property type="entry name" value="PRK12850.1"/>
    <property type="match status" value="1"/>
</dbReference>
<dbReference type="NCBIfam" id="NF009489">
    <property type="entry name" value="PRK12851.1"/>
    <property type="match status" value="1"/>
</dbReference>
<dbReference type="PANTHER" id="PTHR45633">
    <property type="entry name" value="60 KDA HEAT SHOCK PROTEIN, MITOCHONDRIAL"/>
    <property type="match status" value="1"/>
</dbReference>
<dbReference type="Pfam" id="PF00118">
    <property type="entry name" value="Cpn60_TCP1"/>
    <property type="match status" value="1"/>
</dbReference>
<dbReference type="PRINTS" id="PR00298">
    <property type="entry name" value="CHAPERONIN60"/>
</dbReference>
<dbReference type="SUPFAM" id="SSF52029">
    <property type="entry name" value="GroEL apical domain-like"/>
    <property type="match status" value="1"/>
</dbReference>
<dbReference type="SUPFAM" id="SSF48592">
    <property type="entry name" value="GroEL equatorial domain-like"/>
    <property type="match status" value="1"/>
</dbReference>
<dbReference type="SUPFAM" id="SSF54849">
    <property type="entry name" value="GroEL-intermediate domain like"/>
    <property type="match status" value="1"/>
</dbReference>
<dbReference type="PROSITE" id="PS00296">
    <property type="entry name" value="CHAPERONINS_CPN60"/>
    <property type="match status" value="1"/>
</dbReference>
<protein>
    <recommendedName>
        <fullName evidence="1">Chaperonin GroEL</fullName>
        <ecNumber evidence="1">5.6.1.7</ecNumber>
    </recommendedName>
    <alternativeName>
        <fullName evidence="1">60 kDa chaperonin</fullName>
    </alternativeName>
    <alternativeName>
        <fullName evidence="1">Chaperonin-60</fullName>
        <shortName evidence="1">Cpn60</shortName>
    </alternativeName>
</protein>
<reference key="1">
    <citation type="submission" date="1998-11" db="EMBL/GenBank/DDBJ databases">
        <title>Nucleotide sequence comparison of the groE operon of Burkholderia spp.</title>
        <authorList>
            <person name="Zysk G."/>
            <person name="Splettstoesser W.D."/>
            <person name="Neubauer H."/>
        </authorList>
    </citation>
    <scope>NUCLEOTIDE SEQUENCE [GENOMIC DNA]</scope>
    <source>
        <strain>ATCC 25609 / LMG 6865 / NCIMB 10649 / NCTC 10744</strain>
    </source>
</reference>